<dbReference type="EC" id="2.4.1.-"/>
<dbReference type="EMBL" id="AE017343">
    <property type="protein sequence ID" value="AAW42711.1"/>
    <property type="molecule type" value="Genomic_DNA"/>
</dbReference>
<dbReference type="RefSeq" id="XP_570018.1">
    <property type="nucleotide sequence ID" value="XM_570018.1"/>
</dbReference>
<dbReference type="FunCoup" id="P0CP62">
    <property type="interactions" value="55"/>
</dbReference>
<dbReference type="STRING" id="214684.P0CP62"/>
<dbReference type="CAZy" id="GT76">
    <property type="family name" value="Glycosyltransferase Family 76"/>
</dbReference>
<dbReference type="PaxDb" id="214684-P0CP62"/>
<dbReference type="EnsemblFungi" id="AAW42711">
    <property type="protein sequence ID" value="AAW42711"/>
    <property type="gene ID" value="CNC04850"/>
</dbReference>
<dbReference type="VEuPathDB" id="FungiDB:CNC04850"/>
<dbReference type="eggNOG" id="KOG2647">
    <property type="taxonomic scope" value="Eukaryota"/>
</dbReference>
<dbReference type="HOGENOM" id="CLU_029048_1_0_1"/>
<dbReference type="InParanoid" id="P0CP62"/>
<dbReference type="OMA" id="GALFIWC"/>
<dbReference type="OrthoDB" id="10252502at2759"/>
<dbReference type="UniPathway" id="UPA00196"/>
<dbReference type="Proteomes" id="UP000002149">
    <property type="component" value="Chromosome 3"/>
</dbReference>
<dbReference type="GO" id="GO:0005789">
    <property type="term" value="C:endoplasmic reticulum membrane"/>
    <property type="evidence" value="ECO:0000318"/>
    <property type="project" value="GO_Central"/>
</dbReference>
<dbReference type="GO" id="GO:0031501">
    <property type="term" value="C:mannosyltransferase complex"/>
    <property type="evidence" value="ECO:0000318"/>
    <property type="project" value="GO_Central"/>
</dbReference>
<dbReference type="GO" id="GO:0000009">
    <property type="term" value="F:alpha-1,6-mannosyltransferase activity"/>
    <property type="evidence" value="ECO:0007669"/>
    <property type="project" value="InterPro"/>
</dbReference>
<dbReference type="GO" id="GO:0004376">
    <property type="term" value="F:glycolipid mannosyltransferase activity"/>
    <property type="evidence" value="ECO:0007669"/>
    <property type="project" value="InterPro"/>
</dbReference>
<dbReference type="GO" id="GO:0000030">
    <property type="term" value="F:mannosyltransferase activity"/>
    <property type="evidence" value="ECO:0000318"/>
    <property type="project" value="GO_Central"/>
</dbReference>
<dbReference type="GO" id="GO:0006506">
    <property type="term" value="P:GPI anchor biosynthetic process"/>
    <property type="evidence" value="ECO:0000318"/>
    <property type="project" value="GO_Central"/>
</dbReference>
<dbReference type="InterPro" id="IPR007315">
    <property type="entry name" value="PIG-V/Gpi18"/>
</dbReference>
<dbReference type="PANTHER" id="PTHR12468">
    <property type="entry name" value="GPI MANNOSYLTRANSFERASE 2"/>
    <property type="match status" value="1"/>
</dbReference>
<dbReference type="PANTHER" id="PTHR12468:SF2">
    <property type="entry name" value="GPI MANNOSYLTRANSFERASE 2"/>
    <property type="match status" value="1"/>
</dbReference>
<dbReference type="Pfam" id="PF04188">
    <property type="entry name" value="Mannosyl_trans2"/>
    <property type="match status" value="1"/>
</dbReference>
<sequence length="423" mass="46878">MAKLSPLTLIFIAACLSRILQLTILSGLSKALPLFDTSPSLLLSSPPPALRWDAIHFASVAYNGYEYEQQVAFQPGWLAVMRLAGEGVRFIRAASVVELKDVILGGTIVANVAFVAATLVLYKLTKHIFNPTFAFLTSLLYLLPPTATPSAPYTEPIYSLLTFSGIYLLSIKRQMVLAGLCFAGATTIRSTGIFNSITLMCFAVFGDAHIFDLDPKDYCKIRKKLKPFLSAILVVAPFFMFQHYTETVFCTRELKRASTARPWCSNSPPVSYGFVQKLYWNVGPFEYWTVSQLPNFALAMPILFFSLAGVVKFFSHLVSSSQVLNHGTEEIPPPPILFELYSVHVLTMALLLFTSHTQITLRVCLGDPVVWWNAVKLGFDNVQIGEAPTGQVKVNKFGRYWIGWTVVWGAVAAVLWAGHYPPA</sequence>
<gene>
    <name type="primary">GPI18</name>
    <name type="ordered locus">CNC04850</name>
</gene>
<reference key="1">
    <citation type="journal article" date="2005" name="Science">
        <title>The genome of the basidiomycetous yeast and human pathogen Cryptococcus neoformans.</title>
        <authorList>
            <person name="Loftus B.J."/>
            <person name="Fung E."/>
            <person name="Roncaglia P."/>
            <person name="Rowley D."/>
            <person name="Amedeo P."/>
            <person name="Bruno D."/>
            <person name="Vamathevan J."/>
            <person name="Miranda M."/>
            <person name="Anderson I.J."/>
            <person name="Fraser J.A."/>
            <person name="Allen J.E."/>
            <person name="Bosdet I.E."/>
            <person name="Brent M.R."/>
            <person name="Chiu R."/>
            <person name="Doering T.L."/>
            <person name="Donlin M.J."/>
            <person name="D'Souza C.A."/>
            <person name="Fox D.S."/>
            <person name="Grinberg V."/>
            <person name="Fu J."/>
            <person name="Fukushima M."/>
            <person name="Haas B.J."/>
            <person name="Huang J.C."/>
            <person name="Janbon G."/>
            <person name="Jones S.J.M."/>
            <person name="Koo H.L."/>
            <person name="Krzywinski M.I."/>
            <person name="Kwon-Chung K.J."/>
            <person name="Lengeler K.B."/>
            <person name="Maiti R."/>
            <person name="Marra M.A."/>
            <person name="Marra R.E."/>
            <person name="Mathewson C.A."/>
            <person name="Mitchell T.G."/>
            <person name="Pertea M."/>
            <person name="Riggs F.R."/>
            <person name="Salzberg S.L."/>
            <person name="Schein J.E."/>
            <person name="Shvartsbeyn A."/>
            <person name="Shin H."/>
            <person name="Shumway M."/>
            <person name="Specht C.A."/>
            <person name="Suh B.B."/>
            <person name="Tenney A."/>
            <person name="Utterback T.R."/>
            <person name="Wickes B.L."/>
            <person name="Wortman J.R."/>
            <person name="Wye N.H."/>
            <person name="Kronstad J.W."/>
            <person name="Lodge J.K."/>
            <person name="Heitman J."/>
            <person name="Davis R.W."/>
            <person name="Fraser C.M."/>
            <person name="Hyman R.W."/>
        </authorList>
    </citation>
    <scope>NUCLEOTIDE SEQUENCE [LARGE SCALE GENOMIC DNA]</scope>
    <source>
        <strain>JEC21 / ATCC MYA-565</strain>
    </source>
</reference>
<name>GPI18_CRYNJ</name>
<evidence type="ECO:0000250" key="1"/>
<evidence type="ECO:0000255" key="2"/>
<evidence type="ECO:0000305" key="3"/>
<comment type="function">
    <text evidence="1">Mannosyltransferase involved in glycosylphosphatidylinositol-anchor biosynthesis. Transfers the second mannose to the glycosylphosphatidylinositol during GPI precursor assembly (By similarity).</text>
</comment>
<comment type="pathway">
    <text>Glycolipid biosynthesis; glycosylphosphatidylinositol-anchor biosynthesis.</text>
</comment>
<comment type="subcellular location">
    <subcellularLocation>
        <location evidence="1">Endoplasmic reticulum membrane</location>
        <topology evidence="1">Multi-pass membrane protein</topology>
    </subcellularLocation>
</comment>
<comment type="similarity">
    <text evidence="3">Belongs to the PIGV family.</text>
</comment>
<accession>P0CP62</accession>
<accession>Q55WA5</accession>
<accession>Q5KJZ2</accession>
<organism>
    <name type="scientific">Cryptococcus neoformans var. neoformans serotype D (strain JEC21 / ATCC MYA-565)</name>
    <name type="common">Filobasidiella neoformans</name>
    <dbReference type="NCBI Taxonomy" id="214684"/>
    <lineage>
        <taxon>Eukaryota</taxon>
        <taxon>Fungi</taxon>
        <taxon>Dikarya</taxon>
        <taxon>Basidiomycota</taxon>
        <taxon>Agaricomycotina</taxon>
        <taxon>Tremellomycetes</taxon>
        <taxon>Tremellales</taxon>
        <taxon>Cryptococcaceae</taxon>
        <taxon>Cryptococcus</taxon>
        <taxon>Cryptococcus neoformans species complex</taxon>
    </lineage>
</organism>
<protein>
    <recommendedName>
        <fullName>GPI mannosyltransferase 2</fullName>
        <ecNumber>2.4.1.-</ecNumber>
    </recommendedName>
    <alternativeName>
        <fullName>GPI mannosyltransferase II</fullName>
        <shortName>GPI-MT-II</shortName>
    </alternativeName>
    <alternativeName>
        <fullName>Glycosylphosphatidylinositol-anchor biosynthesis protein 18</fullName>
    </alternativeName>
</protein>
<proteinExistence type="inferred from homology"/>
<feature type="chain" id="PRO_0000246245" description="GPI mannosyltransferase 2">
    <location>
        <begin position="1"/>
        <end position="423"/>
    </location>
</feature>
<feature type="transmembrane region" description="Helical" evidence="2">
    <location>
        <begin position="7"/>
        <end position="27"/>
    </location>
</feature>
<feature type="transmembrane region" description="Helical" evidence="2">
    <location>
        <begin position="102"/>
        <end position="122"/>
    </location>
</feature>
<feature type="transmembrane region" description="Helical" evidence="2">
    <location>
        <begin position="128"/>
        <end position="148"/>
    </location>
</feature>
<feature type="transmembrane region" description="Helical" evidence="2">
    <location>
        <begin position="151"/>
        <end position="171"/>
    </location>
</feature>
<feature type="transmembrane region" description="Helical" evidence="2">
    <location>
        <begin position="191"/>
        <end position="211"/>
    </location>
</feature>
<feature type="transmembrane region" description="Helical" evidence="2">
    <location>
        <begin position="228"/>
        <end position="248"/>
    </location>
</feature>
<feature type="transmembrane region" description="Helical" evidence="2">
    <location>
        <begin position="298"/>
        <end position="318"/>
    </location>
</feature>
<feature type="transmembrane region" description="Helical" evidence="2">
    <location>
        <begin position="333"/>
        <end position="353"/>
    </location>
</feature>
<feature type="transmembrane region" description="Helical" evidence="2">
    <location>
        <begin position="400"/>
        <end position="420"/>
    </location>
</feature>
<keyword id="KW-0256">Endoplasmic reticulum</keyword>
<keyword id="KW-0328">Glycosyltransferase</keyword>
<keyword id="KW-0337">GPI-anchor biosynthesis</keyword>
<keyword id="KW-0472">Membrane</keyword>
<keyword id="KW-1185">Reference proteome</keyword>
<keyword id="KW-0808">Transferase</keyword>
<keyword id="KW-0812">Transmembrane</keyword>
<keyword id="KW-1133">Transmembrane helix</keyword>